<protein>
    <recommendedName>
        <fullName>F-box protein VBF</fullName>
    </recommendedName>
    <alternativeName>
        <fullName>Protein PHLOEM PROTEIN 2-LIKE B14</fullName>
        <shortName>AtPP2-B14</shortName>
    </alternativeName>
    <alternativeName>
        <fullName>VIP1-binding F-box protein</fullName>
    </alternativeName>
</protein>
<accession>Q9C7K0</accession>
<reference key="1">
    <citation type="journal article" date="2000" name="Nature">
        <title>Sequence and analysis of chromosome 1 of the plant Arabidopsis thaliana.</title>
        <authorList>
            <person name="Theologis A."/>
            <person name="Ecker J.R."/>
            <person name="Palm C.J."/>
            <person name="Federspiel N.A."/>
            <person name="Kaul S."/>
            <person name="White O."/>
            <person name="Alonso J."/>
            <person name="Altafi H."/>
            <person name="Araujo R."/>
            <person name="Bowman C.L."/>
            <person name="Brooks S.Y."/>
            <person name="Buehler E."/>
            <person name="Chan A."/>
            <person name="Chao Q."/>
            <person name="Chen H."/>
            <person name="Cheuk R.F."/>
            <person name="Chin C.W."/>
            <person name="Chung M.K."/>
            <person name="Conn L."/>
            <person name="Conway A.B."/>
            <person name="Conway A.R."/>
            <person name="Creasy T.H."/>
            <person name="Dewar K."/>
            <person name="Dunn P."/>
            <person name="Etgu P."/>
            <person name="Feldblyum T.V."/>
            <person name="Feng J.-D."/>
            <person name="Fong B."/>
            <person name="Fujii C.Y."/>
            <person name="Gill J.E."/>
            <person name="Goldsmith A.D."/>
            <person name="Haas B."/>
            <person name="Hansen N.F."/>
            <person name="Hughes B."/>
            <person name="Huizar L."/>
            <person name="Hunter J.L."/>
            <person name="Jenkins J."/>
            <person name="Johnson-Hopson C."/>
            <person name="Khan S."/>
            <person name="Khaykin E."/>
            <person name="Kim C.J."/>
            <person name="Koo H.L."/>
            <person name="Kremenetskaia I."/>
            <person name="Kurtz D.B."/>
            <person name="Kwan A."/>
            <person name="Lam B."/>
            <person name="Langin-Hooper S."/>
            <person name="Lee A."/>
            <person name="Lee J.M."/>
            <person name="Lenz C.A."/>
            <person name="Li J.H."/>
            <person name="Li Y.-P."/>
            <person name="Lin X."/>
            <person name="Liu S.X."/>
            <person name="Liu Z.A."/>
            <person name="Luros J.S."/>
            <person name="Maiti R."/>
            <person name="Marziali A."/>
            <person name="Militscher J."/>
            <person name="Miranda M."/>
            <person name="Nguyen M."/>
            <person name="Nierman W.C."/>
            <person name="Osborne B.I."/>
            <person name="Pai G."/>
            <person name="Peterson J."/>
            <person name="Pham P.K."/>
            <person name="Rizzo M."/>
            <person name="Rooney T."/>
            <person name="Rowley D."/>
            <person name="Sakano H."/>
            <person name="Salzberg S.L."/>
            <person name="Schwartz J.R."/>
            <person name="Shinn P."/>
            <person name="Southwick A.M."/>
            <person name="Sun H."/>
            <person name="Tallon L.J."/>
            <person name="Tambunga G."/>
            <person name="Toriumi M.J."/>
            <person name="Town C.D."/>
            <person name="Utterback T."/>
            <person name="Van Aken S."/>
            <person name="Vaysberg M."/>
            <person name="Vysotskaia V.S."/>
            <person name="Walker M."/>
            <person name="Wu D."/>
            <person name="Yu G."/>
            <person name="Fraser C.M."/>
            <person name="Venter J.C."/>
            <person name="Davis R.W."/>
        </authorList>
    </citation>
    <scope>NUCLEOTIDE SEQUENCE [LARGE SCALE GENOMIC DNA]</scope>
    <source>
        <strain>cv. Columbia</strain>
    </source>
</reference>
<reference key="2">
    <citation type="journal article" date="2017" name="Plant J.">
        <title>Araport11: a complete reannotation of the Arabidopsis thaliana reference genome.</title>
        <authorList>
            <person name="Cheng C.Y."/>
            <person name="Krishnakumar V."/>
            <person name="Chan A.P."/>
            <person name="Thibaud-Nissen F."/>
            <person name="Schobel S."/>
            <person name="Town C.D."/>
        </authorList>
    </citation>
    <scope>GENOME REANNOTATION</scope>
    <source>
        <strain>cv. Columbia</strain>
    </source>
</reference>
<reference key="3">
    <citation type="journal article" date="2003" name="Science">
        <title>Empirical analysis of transcriptional activity in the Arabidopsis genome.</title>
        <authorList>
            <person name="Yamada K."/>
            <person name="Lim J."/>
            <person name="Dale J.M."/>
            <person name="Chen H."/>
            <person name="Shinn P."/>
            <person name="Palm C.J."/>
            <person name="Southwick A.M."/>
            <person name="Wu H.C."/>
            <person name="Kim C.J."/>
            <person name="Nguyen M."/>
            <person name="Pham P.K."/>
            <person name="Cheuk R.F."/>
            <person name="Karlin-Newmann G."/>
            <person name="Liu S.X."/>
            <person name="Lam B."/>
            <person name="Sakano H."/>
            <person name="Wu T."/>
            <person name="Yu G."/>
            <person name="Miranda M."/>
            <person name="Quach H.L."/>
            <person name="Tripp M."/>
            <person name="Chang C.H."/>
            <person name="Lee J.M."/>
            <person name="Toriumi M.J."/>
            <person name="Chan M.M."/>
            <person name="Tang C.C."/>
            <person name="Onodera C.S."/>
            <person name="Deng J.M."/>
            <person name="Akiyama K."/>
            <person name="Ansari Y."/>
            <person name="Arakawa T."/>
            <person name="Banh J."/>
            <person name="Banno F."/>
            <person name="Bowser L."/>
            <person name="Brooks S.Y."/>
            <person name="Carninci P."/>
            <person name="Chao Q."/>
            <person name="Choy N."/>
            <person name="Enju A."/>
            <person name="Goldsmith A.D."/>
            <person name="Gurjal M."/>
            <person name="Hansen N.F."/>
            <person name="Hayashizaki Y."/>
            <person name="Johnson-Hopson C."/>
            <person name="Hsuan V.W."/>
            <person name="Iida K."/>
            <person name="Karnes M."/>
            <person name="Khan S."/>
            <person name="Koesema E."/>
            <person name="Ishida J."/>
            <person name="Jiang P.X."/>
            <person name="Jones T."/>
            <person name="Kawai J."/>
            <person name="Kamiya A."/>
            <person name="Meyers C."/>
            <person name="Nakajima M."/>
            <person name="Narusaka M."/>
            <person name="Seki M."/>
            <person name="Sakurai T."/>
            <person name="Satou M."/>
            <person name="Tamse R."/>
            <person name="Vaysberg M."/>
            <person name="Wallender E.K."/>
            <person name="Wong C."/>
            <person name="Yamamura Y."/>
            <person name="Yuan S."/>
            <person name="Shinozaki K."/>
            <person name="Davis R.W."/>
            <person name="Theologis A."/>
            <person name="Ecker J.R."/>
        </authorList>
    </citation>
    <scope>NUCLEOTIDE SEQUENCE [LARGE SCALE MRNA]</scope>
    <source>
        <strain>cv. Columbia</strain>
    </source>
</reference>
<reference key="4">
    <citation type="submission" date="2004-09" db="EMBL/GenBank/DDBJ databases">
        <title>Large-scale analysis of RIKEN Arabidopsis full-length (RAFL) cDNAs.</title>
        <authorList>
            <person name="Totoki Y."/>
            <person name="Seki M."/>
            <person name="Ishida J."/>
            <person name="Nakajima M."/>
            <person name="Enju A."/>
            <person name="Kamiya A."/>
            <person name="Narusaka M."/>
            <person name="Shin-i T."/>
            <person name="Nakagawa M."/>
            <person name="Sakamoto N."/>
            <person name="Oishi K."/>
            <person name="Kohara Y."/>
            <person name="Kobayashi M."/>
            <person name="Toyoda A."/>
            <person name="Sakaki Y."/>
            <person name="Sakurai T."/>
            <person name="Iida K."/>
            <person name="Akiyama K."/>
            <person name="Satou M."/>
            <person name="Toyoda T."/>
            <person name="Konagaya A."/>
            <person name="Carninci P."/>
            <person name="Kawai J."/>
            <person name="Hayashizaki Y."/>
            <person name="Shinozaki K."/>
        </authorList>
    </citation>
    <scope>NUCLEOTIDE SEQUENCE [LARGE SCALE MRNA]</scope>
    <source>
        <strain>cv. Columbia</strain>
    </source>
</reference>
<reference key="5">
    <citation type="journal article" date="2003" name="Plant Physiol.">
        <title>Diversity of the superfamily of phloem lectins (phloem protein 2) in angiosperms.</title>
        <authorList>
            <person name="Dinant S."/>
            <person name="Clark A.M."/>
            <person name="Zhu Y."/>
            <person name="Vilaine F."/>
            <person name="Palauqui J.-C."/>
            <person name="Kusiak C."/>
            <person name="Thompson G.A."/>
        </authorList>
    </citation>
    <scope>GENE FAMILY</scope>
    <scope>NOMENCLATURE</scope>
</reference>
<reference key="6">
    <citation type="journal article" date="2010" name="Cell Host Microbe">
        <title>Agrobacterium induces expression of a host F-box protein required for tumorigenicity.</title>
        <authorList>
            <person name="Zaltsman A."/>
            <person name="Krichevsky A."/>
            <person name="Loyter A."/>
            <person name="Citovsky V."/>
        </authorList>
    </citation>
    <scope>FUNCTION</scope>
    <scope>INDUCTION BY AGROBACTERIUM</scope>
    <scope>INTERACTION WITH VIP1; SKP1A AND AGROBACTERIUM VIRE2</scope>
    <scope>DISRUPTION PHENOTYPE</scope>
</reference>
<name>VBF_ARATH</name>
<dbReference type="EMBL" id="AC069159">
    <property type="protein sequence ID" value="AAG50907.1"/>
    <property type="molecule type" value="Genomic_DNA"/>
</dbReference>
<dbReference type="EMBL" id="CP002684">
    <property type="protein sequence ID" value="AEE33369.1"/>
    <property type="molecule type" value="Genomic_DNA"/>
</dbReference>
<dbReference type="EMBL" id="BT010431">
    <property type="protein sequence ID" value="AAQ62432.1"/>
    <property type="molecule type" value="mRNA"/>
</dbReference>
<dbReference type="EMBL" id="AK175677">
    <property type="protein sequence ID" value="BAD43440.1"/>
    <property type="molecule type" value="mRNA"/>
</dbReference>
<dbReference type="PIR" id="B96604">
    <property type="entry name" value="B96604"/>
</dbReference>
<dbReference type="RefSeq" id="NP_176021.1">
    <property type="nucleotide sequence ID" value="NM_104504.3"/>
</dbReference>
<dbReference type="SMR" id="Q9C7K0"/>
<dbReference type="BioGRID" id="27303">
    <property type="interactions" value="2"/>
</dbReference>
<dbReference type="FunCoup" id="Q9C7K0">
    <property type="interactions" value="2"/>
</dbReference>
<dbReference type="IntAct" id="Q9C7K0">
    <property type="interactions" value="2"/>
</dbReference>
<dbReference type="STRING" id="3702.Q9C7K0"/>
<dbReference type="PaxDb" id="3702-AT1G56250.1"/>
<dbReference type="EnsemblPlants" id="AT1G56250.1">
    <property type="protein sequence ID" value="AT1G56250.1"/>
    <property type="gene ID" value="AT1G56250"/>
</dbReference>
<dbReference type="GeneID" id="842078"/>
<dbReference type="Gramene" id="AT1G56250.1">
    <property type="protein sequence ID" value="AT1G56250.1"/>
    <property type="gene ID" value="AT1G56250"/>
</dbReference>
<dbReference type="KEGG" id="ath:AT1G56250"/>
<dbReference type="Araport" id="AT1G56250"/>
<dbReference type="TAIR" id="AT1G56250">
    <property type="gene designation" value="PP2-B14"/>
</dbReference>
<dbReference type="eggNOG" id="ENOG502QRA4">
    <property type="taxonomic scope" value="Eukaryota"/>
</dbReference>
<dbReference type="HOGENOM" id="CLU_050973_0_0_1"/>
<dbReference type="InParanoid" id="Q9C7K0"/>
<dbReference type="OMA" id="HWNISSK"/>
<dbReference type="PhylomeDB" id="Q9C7K0"/>
<dbReference type="PRO" id="PR:Q9C7K0"/>
<dbReference type="Proteomes" id="UP000006548">
    <property type="component" value="Chromosome 1"/>
</dbReference>
<dbReference type="ExpressionAtlas" id="Q9C7K0">
    <property type="expression patterns" value="baseline and differential"/>
</dbReference>
<dbReference type="GO" id="GO:0030246">
    <property type="term" value="F:carbohydrate binding"/>
    <property type="evidence" value="ECO:0000250"/>
    <property type="project" value="TAIR"/>
</dbReference>
<dbReference type="CDD" id="cd22162">
    <property type="entry name" value="F-box_AtSKIP3-like"/>
    <property type="match status" value="1"/>
</dbReference>
<dbReference type="InterPro" id="IPR036047">
    <property type="entry name" value="F-box-like_dom_sf"/>
</dbReference>
<dbReference type="InterPro" id="IPR001810">
    <property type="entry name" value="F-box_dom"/>
</dbReference>
<dbReference type="InterPro" id="IPR025886">
    <property type="entry name" value="PP2-like"/>
</dbReference>
<dbReference type="PANTHER" id="PTHR32278">
    <property type="entry name" value="F-BOX DOMAIN-CONTAINING PROTEIN"/>
    <property type="match status" value="1"/>
</dbReference>
<dbReference type="PANTHER" id="PTHR32278:SF15">
    <property type="entry name" value="F-BOX PROTEIN PP2-B13-RELATED"/>
    <property type="match status" value="1"/>
</dbReference>
<dbReference type="Pfam" id="PF14299">
    <property type="entry name" value="PP2"/>
    <property type="match status" value="1"/>
</dbReference>
<dbReference type="SUPFAM" id="SSF81383">
    <property type="entry name" value="F-box domain"/>
    <property type="match status" value="1"/>
</dbReference>
<dbReference type="PROSITE" id="PS50181">
    <property type="entry name" value="FBOX"/>
    <property type="match status" value="1"/>
</dbReference>
<keyword id="KW-0192">Crown gall tumor</keyword>
<keyword id="KW-1185">Reference proteome</keyword>
<keyword id="KW-0833">Ubl conjugation pathway</keyword>
<feature type="chain" id="PRO_0000272222" description="F-box protein VBF">
    <location>
        <begin position="1"/>
        <end position="282"/>
    </location>
</feature>
<feature type="domain" description="F-box" evidence="1">
    <location>
        <begin position="1"/>
        <end position="44"/>
    </location>
</feature>
<proteinExistence type="evidence at protein level"/>
<comment type="function">
    <text evidence="2">Component of SCF(VBF) E3 ubiquitin ligase complexes, which mediate the ubiquitination and subsequent proteasomal degradation of target proteins such as VIP1 and Agrobacterium virE2, after their implication in T-DNA translocation to the host nucleus (can functionally replace Agrobacterium VirF). Required during Agrobacterium-induced tumor formation.</text>
</comment>
<comment type="subunit">
    <text evidence="2">Component of SCF(VBF) E3 ubiquitin ligase complex that interacts with VIP1. Interacts directly with SKP1A and VIP1. Forms a complex composed of VIP1, VBF and Agrobacterium virE2.</text>
</comment>
<comment type="induction">
    <text evidence="2">By Agrobacterium.</text>
</comment>
<comment type="disruption phenotype">
    <text evidence="2">Impaired Agrobacterium-mediated tumor formation.</text>
</comment>
<organism>
    <name type="scientific">Arabidopsis thaliana</name>
    <name type="common">Mouse-ear cress</name>
    <dbReference type="NCBI Taxonomy" id="3702"/>
    <lineage>
        <taxon>Eukaryota</taxon>
        <taxon>Viridiplantae</taxon>
        <taxon>Streptophyta</taxon>
        <taxon>Embryophyta</taxon>
        <taxon>Tracheophyta</taxon>
        <taxon>Spermatophyta</taxon>
        <taxon>Magnoliopsida</taxon>
        <taxon>eudicotyledons</taxon>
        <taxon>Gunneridae</taxon>
        <taxon>Pentapetalae</taxon>
        <taxon>rosids</taxon>
        <taxon>malvids</taxon>
        <taxon>Brassicales</taxon>
        <taxon>Brassicaceae</taxon>
        <taxon>Camelineae</taxon>
        <taxon>Arabidopsis</taxon>
    </lineage>
</organism>
<sequence length="282" mass="31840">MMMLPEACIANILAFTSPADAFSSSEVSSVFRLAGDSDFVWEKFLPSDYKSLISQSTDHHWNISSKKEIYRCLCDSLLIDNARKLFKINKFSGKISYVLSARDISITHSDHASYWSWSNVSDSRFSESAELIITDRLEIEGKIQTRVLSANTRYGAYLIVKVTKGAYGLDLVPAETSIKSKNGQISKSATYLCCLDEKKQQMKRLFYGNREERMAMTVEAVGGDGKRREPKCRDDGWMEIELGEFETREGEDDEVNMTLTEVKGYQLKGGILIDGIEVRPKT</sequence>
<gene>
    <name type="primary">VBF</name>
    <name type="synonym">PP2B14</name>
    <name type="ordered locus">At1g56250</name>
    <name type="ORF">F14G9.14</name>
</gene>
<evidence type="ECO:0000255" key="1">
    <source>
        <dbReference type="PROSITE-ProRule" id="PRU00080"/>
    </source>
</evidence>
<evidence type="ECO:0000269" key="2">
    <source>
    </source>
</evidence>